<feature type="chain" id="PRO_0000392986" description="CST complex subunit STN1">
    <location>
        <begin position="1"/>
        <end position="367"/>
    </location>
</feature>
<feature type="DNA-binding region" description="OB">
    <location>
        <begin position="56"/>
        <end position="154"/>
    </location>
</feature>
<feature type="region of interest" description="Winged helix-turn-helix (wHTH) 1" evidence="1">
    <location>
        <begin position="190"/>
        <end position="294"/>
    </location>
</feature>
<feature type="region of interest" description="Winged helix-turn-helix (wHTH) 1" evidence="1">
    <location>
        <begin position="295"/>
        <end position="367"/>
    </location>
</feature>
<organism>
    <name type="scientific">Ailuropoda melanoleuca</name>
    <name type="common">Giant panda</name>
    <dbReference type="NCBI Taxonomy" id="9646"/>
    <lineage>
        <taxon>Eukaryota</taxon>
        <taxon>Metazoa</taxon>
        <taxon>Chordata</taxon>
        <taxon>Craniata</taxon>
        <taxon>Vertebrata</taxon>
        <taxon>Euteleostomi</taxon>
        <taxon>Mammalia</taxon>
        <taxon>Eutheria</taxon>
        <taxon>Laurasiatheria</taxon>
        <taxon>Carnivora</taxon>
        <taxon>Caniformia</taxon>
        <taxon>Ursidae</taxon>
        <taxon>Ailuropoda</taxon>
    </lineage>
</organism>
<accession>D2GXY4</accession>
<proteinExistence type="inferred from homology"/>
<keyword id="KW-0158">Chromosome</keyword>
<keyword id="KW-0238">DNA-binding</keyword>
<keyword id="KW-0539">Nucleus</keyword>
<keyword id="KW-1185">Reference proteome</keyword>
<keyword id="KW-0779">Telomere</keyword>
<name>STN1_AILME</name>
<gene>
    <name evidence="2" type="primary">STN1</name>
    <name type="synonym">OBFC1</name>
    <name type="ORF">PANDA_001803</name>
</gene>
<comment type="function">
    <text evidence="1">Component of the CST complex, a complex that binds to single-stranded DNA and is required to protect telomeres from DNA degradation. The CST complex binds single-stranded DNA with high affinity in a sequence-independent manner, while isolated subunits bind DNA with low affinity by themselves. In addition to telomere protection, the CST complex has probably a more general role in DNA metabolism at non-telomeric sites (By similarity).</text>
</comment>
<comment type="subunit">
    <text evidence="1">Component of the CST complex, composed of TEN1, CTC1 and STN1. Interacts with TEN1 and CTC1; the interaction is direct. Interacts with ACD/TPP1 (By similarity).</text>
</comment>
<comment type="subcellular location">
    <subcellularLocation>
        <location evidence="1">Nucleus</location>
    </subcellularLocation>
    <subcellularLocation>
        <location evidence="1">Chromosome</location>
        <location evidence="1">Telomere</location>
    </subcellularLocation>
</comment>
<comment type="similarity">
    <text evidence="3">Belongs to the STN1 family.</text>
</comment>
<comment type="sequence caution" evidence="3">
    <conflict type="erroneous gene model prediction">
        <sequence resource="EMBL-CDS" id="EFB27672"/>
    </conflict>
</comment>
<reference key="1">
    <citation type="journal article" date="2010" name="Nature">
        <title>The sequence and de novo assembly of the giant panda genome.</title>
        <authorList>
            <person name="Li R."/>
            <person name="Fan W."/>
            <person name="Tian G."/>
            <person name="Zhu H."/>
            <person name="He L."/>
            <person name="Cai J."/>
            <person name="Huang Q."/>
            <person name="Cai Q."/>
            <person name="Li B."/>
            <person name="Bai Y."/>
            <person name="Zhang Z."/>
            <person name="Zhang Y."/>
            <person name="Wang W."/>
            <person name="Li J."/>
            <person name="Wei F."/>
            <person name="Li H."/>
            <person name="Jian M."/>
            <person name="Li J."/>
            <person name="Zhang Z."/>
            <person name="Nielsen R."/>
            <person name="Li D."/>
            <person name="Gu W."/>
            <person name="Yang Z."/>
            <person name="Xuan Z."/>
            <person name="Ryder O.A."/>
            <person name="Leung F.C."/>
            <person name="Zhou Y."/>
            <person name="Cao J."/>
            <person name="Sun X."/>
            <person name="Fu Y."/>
            <person name="Fang X."/>
            <person name="Guo X."/>
            <person name="Wang B."/>
            <person name="Hou R."/>
            <person name="Shen F."/>
            <person name="Mu B."/>
            <person name="Ni P."/>
            <person name="Lin R."/>
            <person name="Qian W."/>
            <person name="Wang G."/>
            <person name="Yu C."/>
            <person name="Nie W."/>
            <person name="Wang J."/>
            <person name="Wu Z."/>
            <person name="Liang H."/>
            <person name="Min J."/>
            <person name="Wu Q."/>
            <person name="Cheng S."/>
            <person name="Ruan J."/>
            <person name="Wang M."/>
            <person name="Shi Z."/>
            <person name="Wen M."/>
            <person name="Liu B."/>
            <person name="Ren X."/>
            <person name="Zheng H."/>
            <person name="Dong D."/>
            <person name="Cook K."/>
            <person name="Shan G."/>
            <person name="Zhang H."/>
            <person name="Kosiol C."/>
            <person name="Xie X."/>
            <person name="Lu Z."/>
            <person name="Zheng H."/>
            <person name="Li Y."/>
            <person name="Steiner C.C."/>
            <person name="Lam T.T."/>
            <person name="Lin S."/>
            <person name="Zhang Q."/>
            <person name="Li G."/>
            <person name="Tian J."/>
            <person name="Gong T."/>
            <person name="Liu H."/>
            <person name="Zhang D."/>
            <person name="Fang L."/>
            <person name="Ye C."/>
            <person name="Zhang J."/>
            <person name="Hu W."/>
            <person name="Xu A."/>
            <person name="Ren Y."/>
            <person name="Zhang G."/>
            <person name="Bruford M.W."/>
            <person name="Li Q."/>
            <person name="Ma L."/>
            <person name="Guo Y."/>
            <person name="An N."/>
            <person name="Hu Y."/>
            <person name="Zheng Y."/>
            <person name="Shi Y."/>
            <person name="Li Z."/>
            <person name="Liu Q."/>
            <person name="Chen Y."/>
            <person name="Zhao J."/>
            <person name="Qu N."/>
            <person name="Zhao S."/>
            <person name="Tian F."/>
            <person name="Wang X."/>
            <person name="Wang H."/>
            <person name="Xu L."/>
            <person name="Liu X."/>
            <person name="Vinar T."/>
            <person name="Wang Y."/>
            <person name="Lam T.W."/>
            <person name="Yiu S.M."/>
            <person name="Liu S."/>
            <person name="Zhang H."/>
            <person name="Li D."/>
            <person name="Huang Y."/>
            <person name="Wang X."/>
            <person name="Yang G."/>
            <person name="Jiang Z."/>
            <person name="Wang J."/>
            <person name="Qin N."/>
            <person name="Li L."/>
            <person name="Li J."/>
            <person name="Bolund L."/>
            <person name="Kristiansen K."/>
            <person name="Wong G.K."/>
            <person name="Olson M."/>
            <person name="Zhang X."/>
            <person name="Li S."/>
            <person name="Yang H."/>
            <person name="Wang J."/>
            <person name="Wang J."/>
        </authorList>
    </citation>
    <scope>NUCLEOTIDE SEQUENCE [LARGE SCALE GENOMIC DNA]</scope>
</reference>
<dbReference type="EMBL" id="GL192371">
    <property type="protein sequence ID" value="EFB27672.1"/>
    <property type="status" value="ALT_SEQ"/>
    <property type="molecule type" value="Genomic_DNA"/>
</dbReference>
<dbReference type="SMR" id="D2GXY4"/>
<dbReference type="STRING" id="9646.ENSAMEP00000018988"/>
<dbReference type="eggNOG" id="KOG3108">
    <property type="taxonomic scope" value="Eukaryota"/>
</dbReference>
<dbReference type="InParanoid" id="D2GXY4"/>
<dbReference type="Proteomes" id="UP000008912">
    <property type="component" value="Unassembled WGS sequence"/>
</dbReference>
<dbReference type="GO" id="GO:0000781">
    <property type="term" value="C:chromosome, telomeric region"/>
    <property type="evidence" value="ECO:0000250"/>
    <property type="project" value="UniProtKB"/>
</dbReference>
<dbReference type="GO" id="GO:1990879">
    <property type="term" value="C:CST complex"/>
    <property type="evidence" value="ECO:0007669"/>
    <property type="project" value="InterPro"/>
</dbReference>
<dbReference type="GO" id="GO:0005634">
    <property type="term" value="C:nucleus"/>
    <property type="evidence" value="ECO:0000250"/>
    <property type="project" value="UniProtKB"/>
</dbReference>
<dbReference type="GO" id="GO:0043047">
    <property type="term" value="F:single-stranded telomeric DNA binding"/>
    <property type="evidence" value="ECO:0000250"/>
    <property type="project" value="UniProtKB"/>
</dbReference>
<dbReference type="GO" id="GO:0016233">
    <property type="term" value="P:telomere capping"/>
    <property type="evidence" value="ECO:0007669"/>
    <property type="project" value="InterPro"/>
</dbReference>
<dbReference type="GO" id="GO:0000723">
    <property type="term" value="P:telomere maintenance"/>
    <property type="evidence" value="ECO:0000250"/>
    <property type="project" value="UniProtKB"/>
</dbReference>
<dbReference type="GO" id="GO:0010833">
    <property type="term" value="P:telomere maintenance via telomere lengthening"/>
    <property type="evidence" value="ECO:0000250"/>
    <property type="project" value="UniProtKB"/>
</dbReference>
<dbReference type="CDD" id="cd04483">
    <property type="entry name" value="hOBFC1_like"/>
    <property type="match status" value="1"/>
</dbReference>
<dbReference type="FunFam" id="1.10.10.10:FF:000275">
    <property type="entry name" value="CST complex subunit STN1"/>
    <property type="match status" value="1"/>
</dbReference>
<dbReference type="FunFam" id="1.10.10.980:FF:000001">
    <property type="entry name" value="CST complex subunit STN1"/>
    <property type="match status" value="1"/>
</dbReference>
<dbReference type="FunFam" id="2.40.50.140:FF:000181">
    <property type="entry name" value="CST complex subunit STN1"/>
    <property type="match status" value="1"/>
</dbReference>
<dbReference type="Gene3D" id="1.10.10.980">
    <property type="entry name" value="CST, Suppressor of Cdc13 homolog, complex subunit STN1, N-terminal domain"/>
    <property type="match status" value="1"/>
</dbReference>
<dbReference type="Gene3D" id="2.40.50.140">
    <property type="entry name" value="Nucleic acid-binding proteins"/>
    <property type="match status" value="1"/>
</dbReference>
<dbReference type="Gene3D" id="1.10.10.10">
    <property type="entry name" value="Winged helix-like DNA-binding domain superfamily/Winged helix DNA-binding domain"/>
    <property type="match status" value="1"/>
</dbReference>
<dbReference type="InterPro" id="IPR015253">
    <property type="entry name" value="CST_STN1_C"/>
</dbReference>
<dbReference type="InterPro" id="IPR042082">
    <property type="entry name" value="CST_Stn1_wHTH1_sf"/>
</dbReference>
<dbReference type="InterPro" id="IPR012340">
    <property type="entry name" value="NA-bd_OB-fold"/>
</dbReference>
<dbReference type="InterPro" id="IPR004365">
    <property type="entry name" value="NA-bd_OB_tRNA"/>
</dbReference>
<dbReference type="InterPro" id="IPR040260">
    <property type="entry name" value="RFA2-like"/>
</dbReference>
<dbReference type="InterPro" id="IPR014647">
    <property type="entry name" value="Stn1"/>
</dbReference>
<dbReference type="InterPro" id="IPR036388">
    <property type="entry name" value="WH-like_DNA-bd_sf"/>
</dbReference>
<dbReference type="InterPro" id="IPR036390">
    <property type="entry name" value="WH_DNA-bd_sf"/>
</dbReference>
<dbReference type="PANTHER" id="PTHR13989:SF33">
    <property type="entry name" value="CST COMPLEX SUBUNIT STN1"/>
    <property type="match status" value="1"/>
</dbReference>
<dbReference type="PANTHER" id="PTHR13989">
    <property type="entry name" value="REPLICATION PROTEIN A-RELATED"/>
    <property type="match status" value="1"/>
</dbReference>
<dbReference type="Pfam" id="PF09170">
    <property type="entry name" value="STN1_2"/>
    <property type="match status" value="1"/>
</dbReference>
<dbReference type="Pfam" id="PF01336">
    <property type="entry name" value="tRNA_anti-codon"/>
    <property type="match status" value="1"/>
</dbReference>
<dbReference type="PIRSF" id="PIRSF036950">
    <property type="entry name" value="UCP036950"/>
    <property type="match status" value="1"/>
</dbReference>
<dbReference type="SUPFAM" id="SSF50249">
    <property type="entry name" value="Nucleic acid-binding proteins"/>
    <property type="match status" value="1"/>
</dbReference>
<dbReference type="SUPFAM" id="SSF46785">
    <property type="entry name" value="Winged helix' DNA-binding domain"/>
    <property type="match status" value="1"/>
</dbReference>
<evidence type="ECO:0000250" key="1"/>
<evidence type="ECO:0000250" key="2">
    <source>
        <dbReference type="UniProtKB" id="Q9H668"/>
    </source>
</evidence>
<evidence type="ECO:0000305" key="3"/>
<sequence>MQPESSQREETPSLLWGLDPVFLAFAKLYIGDILDLKESRQVPGVFFYNGHPIKQVEILGTVIGRREKDAFYSYGVDDGTGVINCICWKKSNNAAPSSAAPALGVLNLTSQLKKLQETIEQKTKIEIGDIVQIRGYVHTYREEREIRVTTYYKVDDPVCNIQIARMLELPSIYRKVYDQPFCSPALEQERAFSDPSALDLASLTRLLSERAKEFLAENKVQTFYQQELEIVESLLSLANQPVIHGAGPEQGDSKSDTTSKAIHSIFKNAIQLLQEKGFVFQKDDGFDKLYYVTREDKELHRKIHHIIQEDCQKPNHAEKGCHFQHILACARLSVSPDLSEGVLQQVLELLEDQSDIISTTEHYYTAF</sequence>
<protein>
    <recommendedName>
        <fullName evidence="2">CST complex subunit STN1</fullName>
    </recommendedName>
    <alternativeName>
        <fullName>Oligonucleotide/oligosaccharide-binding fold-containing protein 1</fullName>
    </alternativeName>
    <alternativeName>
        <fullName>Suppressor of cdc thirteen homolog</fullName>
    </alternativeName>
</protein>